<feature type="transit peptide" description="Mitochondrion" evidence="2">
    <location>
        <begin position="1"/>
        <end position="29"/>
    </location>
</feature>
<feature type="chain" id="PRO_0000010760" description="Aminomethyltransferase, mitochondrial">
    <location>
        <begin position="30"/>
        <end position="407"/>
    </location>
</feature>
<feature type="binding site" evidence="1">
    <location>
        <position position="234"/>
    </location>
    <ligand>
        <name>substrate</name>
    </ligand>
</feature>
<feature type="binding site" evidence="1">
    <location>
        <position position="265"/>
    </location>
    <ligand>
        <name>substrate</name>
    </ligand>
</feature>
<feature type="binding site" evidence="1">
    <location>
        <position position="403"/>
    </location>
    <ligand>
        <name>substrate</name>
    </ligand>
</feature>
<accession>P49363</accession>
<dbReference type="EC" id="2.1.2.10"/>
<dbReference type="EMBL" id="Z25858">
    <property type="protein sequence ID" value="CAA81077.1"/>
    <property type="molecule type" value="mRNA"/>
</dbReference>
<dbReference type="PIR" id="S56660">
    <property type="entry name" value="S56660"/>
</dbReference>
<dbReference type="SMR" id="P49363"/>
<dbReference type="GO" id="GO:0005960">
    <property type="term" value="C:glycine cleavage complex"/>
    <property type="evidence" value="ECO:0007669"/>
    <property type="project" value="InterPro"/>
</dbReference>
<dbReference type="GO" id="GO:0005739">
    <property type="term" value="C:mitochondrion"/>
    <property type="evidence" value="ECO:0007669"/>
    <property type="project" value="UniProtKB-SubCell"/>
</dbReference>
<dbReference type="GO" id="GO:0004047">
    <property type="term" value="F:aminomethyltransferase activity"/>
    <property type="evidence" value="ECO:0007669"/>
    <property type="project" value="UniProtKB-EC"/>
</dbReference>
<dbReference type="GO" id="GO:0008483">
    <property type="term" value="F:transaminase activity"/>
    <property type="evidence" value="ECO:0007669"/>
    <property type="project" value="UniProtKB-KW"/>
</dbReference>
<dbReference type="GO" id="GO:0006546">
    <property type="term" value="P:glycine catabolic process"/>
    <property type="evidence" value="ECO:0007669"/>
    <property type="project" value="InterPro"/>
</dbReference>
<dbReference type="FunFam" id="2.40.30.110:FF:000002">
    <property type="entry name" value="Aminomethyltransferase"/>
    <property type="match status" value="1"/>
</dbReference>
<dbReference type="FunFam" id="3.30.70.1400:FF:000001">
    <property type="entry name" value="Aminomethyltransferase"/>
    <property type="match status" value="1"/>
</dbReference>
<dbReference type="FunFam" id="4.10.1250.10:FF:000002">
    <property type="entry name" value="Aminomethyltransferase"/>
    <property type="match status" value="1"/>
</dbReference>
<dbReference type="Gene3D" id="2.40.30.110">
    <property type="entry name" value="Aminomethyltransferase beta-barrel domains"/>
    <property type="match status" value="1"/>
</dbReference>
<dbReference type="Gene3D" id="3.30.70.1400">
    <property type="entry name" value="Aminomethyltransferase beta-barrel domains"/>
    <property type="match status" value="1"/>
</dbReference>
<dbReference type="Gene3D" id="4.10.1250.10">
    <property type="entry name" value="Aminomethyltransferase fragment"/>
    <property type="match status" value="1"/>
</dbReference>
<dbReference type="Gene3D" id="3.30.1360.120">
    <property type="entry name" value="Probable tRNA modification gtpase trme, domain 1"/>
    <property type="match status" value="1"/>
</dbReference>
<dbReference type="InterPro" id="IPR006223">
    <property type="entry name" value="GCS_T"/>
</dbReference>
<dbReference type="InterPro" id="IPR013977">
    <property type="entry name" value="GCST_C"/>
</dbReference>
<dbReference type="InterPro" id="IPR006222">
    <property type="entry name" value="GCV_T_N"/>
</dbReference>
<dbReference type="InterPro" id="IPR028896">
    <property type="entry name" value="GcvT/YgfZ/DmdA"/>
</dbReference>
<dbReference type="InterPro" id="IPR029043">
    <property type="entry name" value="GcvT/YgfZ_C"/>
</dbReference>
<dbReference type="InterPro" id="IPR027266">
    <property type="entry name" value="TrmE/GcvT_dom1"/>
</dbReference>
<dbReference type="NCBIfam" id="TIGR00528">
    <property type="entry name" value="gcvT"/>
    <property type="match status" value="1"/>
</dbReference>
<dbReference type="NCBIfam" id="NF001567">
    <property type="entry name" value="PRK00389.1"/>
    <property type="match status" value="1"/>
</dbReference>
<dbReference type="PANTHER" id="PTHR43757">
    <property type="entry name" value="AMINOMETHYLTRANSFERASE"/>
    <property type="match status" value="1"/>
</dbReference>
<dbReference type="PANTHER" id="PTHR43757:SF2">
    <property type="entry name" value="AMINOMETHYLTRANSFERASE, MITOCHONDRIAL"/>
    <property type="match status" value="1"/>
</dbReference>
<dbReference type="Pfam" id="PF01571">
    <property type="entry name" value="GCV_T"/>
    <property type="match status" value="1"/>
</dbReference>
<dbReference type="Pfam" id="PF08669">
    <property type="entry name" value="GCV_T_C"/>
    <property type="match status" value="1"/>
</dbReference>
<dbReference type="PIRSF" id="PIRSF006487">
    <property type="entry name" value="GcvT"/>
    <property type="match status" value="1"/>
</dbReference>
<dbReference type="SUPFAM" id="SSF101790">
    <property type="entry name" value="Aminomethyltransferase beta-barrel domain"/>
    <property type="match status" value="1"/>
</dbReference>
<dbReference type="SUPFAM" id="SSF103025">
    <property type="entry name" value="Folate-binding domain"/>
    <property type="match status" value="1"/>
</dbReference>
<comment type="function">
    <text>The glycine cleavage system catalyzes the degradation of glycine.</text>
</comment>
<comment type="catalytic activity">
    <reaction>
        <text>N(6)-[(R)-S(8)-aminomethyldihydrolipoyl]-L-lysyl-[protein] + (6S)-5,6,7,8-tetrahydrofolate = N(6)-[(R)-dihydrolipoyl]-L-lysyl-[protein] + (6R)-5,10-methylene-5,6,7,8-tetrahydrofolate + NH4(+)</text>
        <dbReference type="Rhea" id="RHEA:16945"/>
        <dbReference type="Rhea" id="RHEA-COMP:10475"/>
        <dbReference type="Rhea" id="RHEA-COMP:10492"/>
        <dbReference type="ChEBI" id="CHEBI:15636"/>
        <dbReference type="ChEBI" id="CHEBI:28938"/>
        <dbReference type="ChEBI" id="CHEBI:57453"/>
        <dbReference type="ChEBI" id="CHEBI:83100"/>
        <dbReference type="ChEBI" id="CHEBI:83143"/>
        <dbReference type="EC" id="2.1.2.10"/>
    </reaction>
</comment>
<comment type="subunit">
    <text>The glycine cleavage system is composed of four proteins: P, T, L and H.</text>
</comment>
<comment type="subcellular location">
    <subcellularLocation>
        <location>Mitochondrion</location>
    </subcellularLocation>
</comment>
<comment type="similarity">
    <text evidence="3">Belongs to the GcvT family.</text>
</comment>
<proteinExistence type="evidence at transcript level"/>
<reference key="1">
    <citation type="journal article" date="1995" name="Plant Mol. Biol.">
        <title>T-protein of the glycine decarboxylase multienzyme complex: evidence for partial similarity to formyltetrahydrofolate synthetase.</title>
        <authorList>
            <person name="Kopriva S."/>
            <person name="Turner S.R."/>
            <person name="Rawsthorne S."/>
            <person name="Bauwe H."/>
        </authorList>
    </citation>
    <scope>NUCLEOTIDE SEQUENCE [MRNA]</scope>
    <source>
        <tissue>Leaf</tissue>
    </source>
</reference>
<organism>
    <name type="scientific">Flaveria pringlei</name>
    <dbReference type="NCBI Taxonomy" id="4226"/>
    <lineage>
        <taxon>Eukaryota</taxon>
        <taxon>Viridiplantae</taxon>
        <taxon>Streptophyta</taxon>
        <taxon>Embryophyta</taxon>
        <taxon>Tracheophyta</taxon>
        <taxon>Spermatophyta</taxon>
        <taxon>Magnoliopsida</taxon>
        <taxon>eudicotyledons</taxon>
        <taxon>Gunneridae</taxon>
        <taxon>Pentapetalae</taxon>
        <taxon>asterids</taxon>
        <taxon>campanulids</taxon>
        <taxon>Asterales</taxon>
        <taxon>Asteraceae</taxon>
        <taxon>Asteroideae</taxon>
        <taxon>Heliantheae alliance</taxon>
        <taxon>Tageteae</taxon>
        <taxon>Flaveria</taxon>
    </lineage>
</organism>
<protein>
    <recommendedName>
        <fullName>Aminomethyltransferase, mitochondrial</fullName>
        <ecNumber>2.1.2.10</ecNumber>
    </recommendedName>
    <alternativeName>
        <fullName>Glycine cleavage system T protein</fullName>
        <shortName>GCVT</shortName>
    </alternativeName>
</protein>
<evidence type="ECO:0000250" key="1"/>
<evidence type="ECO:0000255" key="2"/>
<evidence type="ECO:0000305" key="3"/>
<gene>
    <name type="primary">GDCST</name>
</gene>
<keyword id="KW-0032">Aminotransferase</keyword>
<keyword id="KW-0496">Mitochondrion</keyword>
<keyword id="KW-0808">Transferase</keyword>
<keyword id="KW-0809">Transit peptide</keyword>
<sequence length="407" mass="44353">MRGGLWQLGQSITRRLGQSDKKTIARRCYASEADLKKTVLYDFHVANGGKMVPFAGWSMPIQYKDSIMESTINCRENGSLFDVSHMCGLSLKGKDCVPFLEKLVVADVAGLRPGTGSLTVFTNEKGGAIDDSVITKVTDDHIYLVVNAGCRDKDLAHIEEHMKAFKAKGGDVSWHIYDERSLLALQGPLAGSTLQHLTKEDLSKMYFGDFRIIDINGSKCFLTRTGYTGEDGFEISVPSENAVDLAKAILEKSEGKVRLTGLGARDSLRLEAGLCLYGNDMEQHITPVEAGLTWAIGKRRRAEGGFLGADVILKQIADGPAIRRVGLFSTGPPARSHSEIQNEKGENIGEVTSGGFSPCLKKNIGMGYVKSGLHKPGTKLKIVIRGKTYEGSVTKMPFVPTKYYKPA</sequence>
<name>GCST_FLAPR</name>